<evidence type="ECO:0000255" key="1">
    <source>
        <dbReference type="HAMAP-Rule" id="MF_01323"/>
    </source>
</evidence>
<organism>
    <name type="scientific">Sinapis alba</name>
    <name type="common">White mustard</name>
    <name type="synonym">Brassica hirta</name>
    <dbReference type="NCBI Taxonomy" id="3728"/>
    <lineage>
        <taxon>Eukaryota</taxon>
        <taxon>Viridiplantae</taxon>
        <taxon>Streptophyta</taxon>
        <taxon>Embryophyta</taxon>
        <taxon>Tracheophyta</taxon>
        <taxon>Spermatophyta</taxon>
        <taxon>Magnoliopsida</taxon>
        <taxon>eudicotyledons</taxon>
        <taxon>Gunneridae</taxon>
        <taxon>Pentapetalae</taxon>
        <taxon>rosids</taxon>
        <taxon>malvids</taxon>
        <taxon>Brassicales</taxon>
        <taxon>Brassicaceae</taxon>
        <taxon>Brassiceae</taxon>
        <taxon>Sinapis</taxon>
    </lineage>
</organism>
<sequence length="688" mass="79495">MIDRYKHQQLRIGLVSPQQISAWATKKIPNGEIVGEVTKPYTFHYKTNKPEKDGLFCERIFGPIKSGICACGNYRVIGDEKGDPKFCEQCGVEFVDSRIRRYQMGYIKLTCPVTHVWYLKRLPSYIANLLDKPLKELEGLVYCDVCFDRNPNFSFARPITKKPTFLRLRGSFEYEIQSWKYSIPLFFTTQGFEIFRNREISTGAGAIREQLADLDLRIIIENSLVEWKQLGEEGPTGNEWEDRKIVRRKDFLVRRMELAKHFIRTNIEPEWMVLCLLPVLPPELRPIIQIEGGKLMSSDINELYRRVIYRNNTLTDLLTTSRSTPGELVMCQEKLVQEAVDTLLDNGIRGQPMRDGHNKVYKSFSDVIEGKEGRFRETLLGKRVDYSGRSVIVVGPSLSLHRCGLPREIAIELFQTFVIRGLIRQHLASNIGVAKSQIREKKPIVWEILQEVMQGHPVLLNRAPTLHRLGIQSFQPILVEGRTICLHPLVCKGFNADFDGDQMAVHVPLSLEAQAEARLLMFSHMNLLSPAIGDPISVPTQDMLIGLYVLTSGTRRGICANRYNPCNRKNYQNERIYETNYKYMKEPFFCNSYDAIGAYRQKRINLDSPLWLRWQLDQRVIASKEVPIEVHYESFGNYHEIYAHYLIVRSVKKETLYIYIRTTVGHISLYREIEEAIQGFSQACSYDT</sequence>
<reference key="1">
    <citation type="journal article" date="2000" name="Eur. J. Biochem.">
        <title>The multisubunit chloroplast RNA polymerase A from mustard (Sinapis alba L.). Integration of a prokaryotic core into a larger complex with organelle-specific functions.</title>
        <authorList>
            <person name="Pfannschmidt T."/>
            <person name="Ogrzewalla K."/>
            <person name="Baginsky S."/>
            <person name="Sickmann A."/>
            <person name="Meyer H.E."/>
            <person name="Link G."/>
        </authorList>
    </citation>
    <scope>NUCLEOTIDE SEQUENCE [GENOMIC DNA]</scope>
    <scope>CHARACTERIZATION</scope>
    <source>
        <strain>cv. Albatros</strain>
        <tissue>Cotyledon</tissue>
    </source>
</reference>
<comment type="function">
    <text evidence="1">DNA-dependent RNA polymerase catalyzes the transcription of DNA into RNA using the four ribonucleoside triphosphates as substrates.</text>
</comment>
<comment type="catalytic activity">
    <reaction evidence="1">
        <text>RNA(n) + a ribonucleoside 5'-triphosphate = RNA(n+1) + diphosphate</text>
        <dbReference type="Rhea" id="RHEA:21248"/>
        <dbReference type="Rhea" id="RHEA-COMP:14527"/>
        <dbReference type="Rhea" id="RHEA-COMP:17342"/>
        <dbReference type="ChEBI" id="CHEBI:33019"/>
        <dbReference type="ChEBI" id="CHEBI:61557"/>
        <dbReference type="ChEBI" id="CHEBI:140395"/>
        <dbReference type="EC" id="2.7.7.6"/>
    </reaction>
</comment>
<comment type="cofactor">
    <cofactor evidence="1">
        <name>Mg(2+)</name>
        <dbReference type="ChEBI" id="CHEBI:18420"/>
    </cofactor>
    <text evidence="1">Binds 1 Mg(2+) ion per subunit.</text>
</comment>
<comment type="cofactor">
    <cofactor evidence="1">
        <name>Zn(2+)</name>
        <dbReference type="ChEBI" id="CHEBI:29105"/>
    </cofactor>
    <text evidence="1">Binds 1 Zn(2+) ion per subunit.</text>
</comment>
<comment type="subunit">
    <text evidence="1">In plastids the minimal PEP RNA polymerase catalytic core is composed of four subunits: alpha, beta, beta', and beta''. When a (nuclear-encoded) sigma factor is associated with the core the holoenzyme is formed, which can initiate transcription.</text>
</comment>
<comment type="subcellular location">
    <subcellularLocation>
        <location evidence="1">Plastid</location>
        <location evidence="1">Chloroplast</location>
    </subcellularLocation>
</comment>
<comment type="similarity">
    <text evidence="1">Belongs to the RNA polymerase beta' chain family. RpoC1 subfamily.</text>
</comment>
<geneLocation type="chloroplast"/>
<dbReference type="EC" id="2.7.7.6" evidence="1"/>
<dbReference type="EMBL" id="AJ243754">
    <property type="protein sequence ID" value="CAB48413.1"/>
    <property type="molecule type" value="Genomic_DNA"/>
</dbReference>
<dbReference type="EMBL" id="X82417">
    <property type="protein sequence ID" value="CAA57815.1"/>
    <property type="molecule type" value="Genomic_DNA"/>
</dbReference>
<dbReference type="PIR" id="S48843">
    <property type="entry name" value="S48843"/>
</dbReference>
<dbReference type="SMR" id="P46819"/>
<dbReference type="GO" id="GO:0009507">
    <property type="term" value="C:chloroplast"/>
    <property type="evidence" value="ECO:0007669"/>
    <property type="project" value="UniProtKB-SubCell"/>
</dbReference>
<dbReference type="GO" id="GO:0000428">
    <property type="term" value="C:DNA-directed RNA polymerase complex"/>
    <property type="evidence" value="ECO:0007669"/>
    <property type="project" value="UniProtKB-KW"/>
</dbReference>
<dbReference type="GO" id="GO:0005739">
    <property type="term" value="C:mitochondrion"/>
    <property type="evidence" value="ECO:0007669"/>
    <property type="project" value="GOC"/>
</dbReference>
<dbReference type="GO" id="GO:0003677">
    <property type="term" value="F:DNA binding"/>
    <property type="evidence" value="ECO:0007669"/>
    <property type="project" value="UniProtKB-UniRule"/>
</dbReference>
<dbReference type="GO" id="GO:0003899">
    <property type="term" value="F:DNA-directed RNA polymerase activity"/>
    <property type="evidence" value="ECO:0007669"/>
    <property type="project" value="UniProtKB-UniRule"/>
</dbReference>
<dbReference type="GO" id="GO:0000287">
    <property type="term" value="F:magnesium ion binding"/>
    <property type="evidence" value="ECO:0007669"/>
    <property type="project" value="UniProtKB-UniRule"/>
</dbReference>
<dbReference type="GO" id="GO:0008270">
    <property type="term" value="F:zinc ion binding"/>
    <property type="evidence" value="ECO:0007669"/>
    <property type="project" value="UniProtKB-UniRule"/>
</dbReference>
<dbReference type="GO" id="GO:0006351">
    <property type="term" value="P:DNA-templated transcription"/>
    <property type="evidence" value="ECO:0007669"/>
    <property type="project" value="UniProtKB-UniRule"/>
</dbReference>
<dbReference type="FunFam" id="1.10.40.90:FF:000002">
    <property type="entry name" value="DNA-directed RNA polymerase subunit"/>
    <property type="match status" value="1"/>
</dbReference>
<dbReference type="FunFam" id="4.10.860.120:FF:000007">
    <property type="entry name" value="DNA-directed RNA polymerase subunit gamma"/>
    <property type="match status" value="1"/>
</dbReference>
<dbReference type="Gene3D" id="1.10.40.90">
    <property type="match status" value="1"/>
</dbReference>
<dbReference type="Gene3D" id="2.40.40.20">
    <property type="match status" value="1"/>
</dbReference>
<dbReference type="Gene3D" id="4.10.860.120">
    <property type="entry name" value="RNA polymerase II, clamp domain"/>
    <property type="match status" value="1"/>
</dbReference>
<dbReference type="Gene3D" id="1.10.274.100">
    <property type="entry name" value="RNA polymerase Rpb1, domain 3"/>
    <property type="match status" value="1"/>
</dbReference>
<dbReference type="HAMAP" id="MF_01323">
    <property type="entry name" value="RNApol_bact_RpoC1"/>
    <property type="match status" value="1"/>
</dbReference>
<dbReference type="InterPro" id="IPR045867">
    <property type="entry name" value="DNA-dir_RpoC_beta_prime"/>
</dbReference>
<dbReference type="InterPro" id="IPR000722">
    <property type="entry name" value="RNA_pol_asu"/>
</dbReference>
<dbReference type="InterPro" id="IPR006592">
    <property type="entry name" value="RNA_pol_N"/>
</dbReference>
<dbReference type="InterPro" id="IPR007080">
    <property type="entry name" value="RNA_pol_Rpb1_1"/>
</dbReference>
<dbReference type="InterPro" id="IPR042102">
    <property type="entry name" value="RNA_pol_Rpb1_3_sf"/>
</dbReference>
<dbReference type="InterPro" id="IPR044893">
    <property type="entry name" value="RNA_pol_Rpb1_clamp_domain"/>
</dbReference>
<dbReference type="InterPro" id="IPR034678">
    <property type="entry name" value="RNApol_RpoC1"/>
</dbReference>
<dbReference type="PANTHER" id="PTHR19376">
    <property type="entry name" value="DNA-DIRECTED RNA POLYMERASE"/>
    <property type="match status" value="1"/>
</dbReference>
<dbReference type="PANTHER" id="PTHR19376:SF54">
    <property type="entry name" value="DNA-DIRECTED RNA POLYMERASE SUBUNIT BETA"/>
    <property type="match status" value="1"/>
</dbReference>
<dbReference type="Pfam" id="PF04997">
    <property type="entry name" value="RNA_pol_Rpb1_1"/>
    <property type="match status" value="1"/>
</dbReference>
<dbReference type="Pfam" id="PF00623">
    <property type="entry name" value="RNA_pol_Rpb1_2"/>
    <property type="match status" value="2"/>
</dbReference>
<dbReference type="SMART" id="SM00663">
    <property type="entry name" value="RPOLA_N"/>
    <property type="match status" value="1"/>
</dbReference>
<dbReference type="SUPFAM" id="SSF64484">
    <property type="entry name" value="beta and beta-prime subunits of DNA dependent RNA-polymerase"/>
    <property type="match status" value="1"/>
</dbReference>
<name>RPOC1_SINAL</name>
<proteinExistence type="evidence at protein level"/>
<keyword id="KW-0150">Chloroplast</keyword>
<keyword id="KW-0240">DNA-directed RNA polymerase</keyword>
<keyword id="KW-0460">Magnesium</keyword>
<keyword id="KW-0479">Metal-binding</keyword>
<keyword id="KW-0548">Nucleotidyltransferase</keyword>
<keyword id="KW-0934">Plastid</keyword>
<keyword id="KW-0804">Transcription</keyword>
<keyword id="KW-0808">Transferase</keyword>
<keyword id="KW-0862">Zinc</keyword>
<protein>
    <recommendedName>
        <fullName evidence="1">DNA-directed RNA polymerase subunit beta'</fullName>
        <ecNumber evidence="1">2.7.7.6</ecNumber>
    </recommendedName>
    <alternativeName>
        <fullName evidence="1">PEP</fullName>
    </alternativeName>
    <alternativeName>
        <fullName evidence="1">Plastid-encoded RNA polymerase subunit beta'</fullName>
        <shortName evidence="1">RNA polymerase subunit beta'</shortName>
    </alternativeName>
</protein>
<gene>
    <name evidence="1" type="primary">rpoC1</name>
</gene>
<accession>P46819</accession>
<accession>Q9THV6</accession>
<feature type="chain" id="PRO_0000067897" description="DNA-directed RNA polymerase subunit beta'">
    <location>
        <begin position="1"/>
        <end position="688"/>
    </location>
</feature>
<feature type="binding site" evidence="1">
    <location>
        <position position="69"/>
    </location>
    <ligand>
        <name>Zn(2+)</name>
        <dbReference type="ChEBI" id="CHEBI:29105"/>
    </ligand>
</feature>
<feature type="binding site" evidence="1">
    <location>
        <position position="71"/>
    </location>
    <ligand>
        <name>Zn(2+)</name>
        <dbReference type="ChEBI" id="CHEBI:29105"/>
    </ligand>
</feature>
<feature type="binding site" evidence="1">
    <location>
        <position position="87"/>
    </location>
    <ligand>
        <name>Zn(2+)</name>
        <dbReference type="ChEBI" id="CHEBI:29105"/>
    </ligand>
</feature>
<feature type="binding site" evidence="1">
    <location>
        <position position="90"/>
    </location>
    <ligand>
        <name>Zn(2+)</name>
        <dbReference type="ChEBI" id="CHEBI:29105"/>
    </ligand>
</feature>
<feature type="binding site" evidence="1">
    <location>
        <position position="497"/>
    </location>
    <ligand>
        <name>Mg(2+)</name>
        <dbReference type="ChEBI" id="CHEBI:18420"/>
    </ligand>
</feature>
<feature type="binding site" evidence="1">
    <location>
        <position position="499"/>
    </location>
    <ligand>
        <name>Mg(2+)</name>
        <dbReference type="ChEBI" id="CHEBI:18420"/>
    </ligand>
</feature>
<feature type="binding site" evidence="1">
    <location>
        <position position="501"/>
    </location>
    <ligand>
        <name>Mg(2+)</name>
        <dbReference type="ChEBI" id="CHEBI:18420"/>
    </ligand>
</feature>